<name>COX2_BRENA</name>
<proteinExistence type="inferred from homology"/>
<gene>
    <name type="primary">COX2</name>
</gene>
<evidence type="ECO:0000250" key="1">
    <source>
        <dbReference type="UniProtKB" id="P00410"/>
    </source>
</evidence>
<evidence type="ECO:0000255" key="2"/>
<evidence type="ECO:0000305" key="3"/>
<geneLocation type="mitochondrion"/>
<feature type="chain" id="PRO_0000183523" description="Cytochrome c oxidase subunit 2">
    <location>
        <begin position="1"/>
        <end position="248"/>
    </location>
</feature>
<feature type="topological domain" description="Mitochondrial intermembrane" evidence="2">
    <location>
        <begin position="1"/>
        <end position="39"/>
    </location>
</feature>
<feature type="transmembrane region" description="Helical" evidence="2">
    <location>
        <begin position="40"/>
        <end position="56"/>
    </location>
</feature>
<feature type="topological domain" description="Mitochondrial matrix" evidence="2">
    <location>
        <begin position="57"/>
        <end position="87"/>
    </location>
</feature>
<feature type="transmembrane region" description="Helical" evidence="2">
    <location>
        <begin position="88"/>
        <end position="104"/>
    </location>
</feature>
<feature type="topological domain" description="Mitochondrial intermembrane" evidence="2">
    <location>
        <begin position="105"/>
        <end position="248"/>
    </location>
</feature>
<feature type="binding site" evidence="1">
    <location>
        <position position="183"/>
    </location>
    <ligand>
        <name>Cu cation</name>
        <dbReference type="ChEBI" id="CHEBI:23378"/>
        <label>A1</label>
    </ligand>
</feature>
<feature type="binding site" evidence="1">
    <location>
        <position position="218"/>
    </location>
    <ligand>
        <name>Cu cation</name>
        <dbReference type="ChEBI" id="CHEBI:23378"/>
        <label>A1</label>
    </ligand>
</feature>
<feature type="binding site" evidence="1">
    <location>
        <position position="218"/>
    </location>
    <ligand>
        <name>Cu cation</name>
        <dbReference type="ChEBI" id="CHEBI:23378"/>
        <label>A2</label>
    </ligand>
</feature>
<feature type="binding site" evidence="1">
    <location>
        <position position="220"/>
    </location>
    <ligand>
        <name>Cu cation</name>
        <dbReference type="ChEBI" id="CHEBI:23378"/>
        <label>A2</label>
    </ligand>
</feature>
<feature type="binding site" evidence="1">
    <location>
        <position position="220"/>
    </location>
    <ligand>
        <name>Mg(2+)</name>
        <dbReference type="ChEBI" id="CHEBI:18420"/>
        <note>ligand shared with subunit 1</note>
    </ligand>
</feature>
<feature type="binding site" evidence="1">
    <location>
        <position position="222"/>
    </location>
    <ligand>
        <name>Cu cation</name>
        <dbReference type="ChEBI" id="CHEBI:23378"/>
        <label>A1</label>
    </ligand>
</feature>
<feature type="binding site" evidence="1">
    <location>
        <position position="222"/>
    </location>
    <ligand>
        <name>Cu cation</name>
        <dbReference type="ChEBI" id="CHEBI:23378"/>
        <label>A2</label>
    </ligand>
</feature>
<feature type="binding site" evidence="1">
    <location>
        <position position="226"/>
    </location>
    <ligand>
        <name>Cu cation</name>
        <dbReference type="ChEBI" id="CHEBI:23378"/>
        <label>A2</label>
    </ligand>
</feature>
<feature type="binding site" evidence="1">
    <location>
        <position position="229"/>
    </location>
    <ligand>
        <name>Cu cation</name>
        <dbReference type="ChEBI" id="CHEBI:23378"/>
        <label>A1</label>
    </ligand>
</feature>
<dbReference type="EC" id="7.1.1.9"/>
<dbReference type="EMBL" id="X64821">
    <property type="protein sequence ID" value="CAA46033.1"/>
    <property type="molecule type" value="Genomic_DNA"/>
</dbReference>
<dbReference type="PIR" id="S33372">
    <property type="entry name" value="S33372"/>
</dbReference>
<dbReference type="SMR" id="P43372"/>
<dbReference type="GO" id="GO:0005743">
    <property type="term" value="C:mitochondrial inner membrane"/>
    <property type="evidence" value="ECO:0007669"/>
    <property type="project" value="UniProtKB-SubCell"/>
</dbReference>
<dbReference type="GO" id="GO:0005507">
    <property type="term" value="F:copper ion binding"/>
    <property type="evidence" value="ECO:0007669"/>
    <property type="project" value="InterPro"/>
</dbReference>
<dbReference type="GO" id="GO:0004129">
    <property type="term" value="F:cytochrome-c oxidase activity"/>
    <property type="evidence" value="ECO:0007669"/>
    <property type="project" value="UniProtKB-EC"/>
</dbReference>
<dbReference type="GO" id="GO:0042773">
    <property type="term" value="P:ATP synthesis coupled electron transport"/>
    <property type="evidence" value="ECO:0007669"/>
    <property type="project" value="TreeGrafter"/>
</dbReference>
<dbReference type="CDD" id="cd13912">
    <property type="entry name" value="CcO_II_C"/>
    <property type="match status" value="1"/>
</dbReference>
<dbReference type="FunFam" id="1.10.287.90:FF:000004">
    <property type="entry name" value="Cytochrome c oxidase subunit 2"/>
    <property type="match status" value="1"/>
</dbReference>
<dbReference type="FunFam" id="2.60.40.420:FF:000001">
    <property type="entry name" value="Cytochrome c oxidase subunit 2"/>
    <property type="match status" value="1"/>
</dbReference>
<dbReference type="Gene3D" id="1.10.287.90">
    <property type="match status" value="1"/>
</dbReference>
<dbReference type="Gene3D" id="2.60.40.420">
    <property type="entry name" value="Cupredoxins - blue copper proteins"/>
    <property type="match status" value="1"/>
</dbReference>
<dbReference type="InterPro" id="IPR045187">
    <property type="entry name" value="CcO_II"/>
</dbReference>
<dbReference type="InterPro" id="IPR002429">
    <property type="entry name" value="CcO_II-like_C"/>
</dbReference>
<dbReference type="InterPro" id="IPR034210">
    <property type="entry name" value="CcO_II_C"/>
</dbReference>
<dbReference type="InterPro" id="IPR001505">
    <property type="entry name" value="Copper_CuA"/>
</dbReference>
<dbReference type="InterPro" id="IPR008972">
    <property type="entry name" value="Cupredoxin"/>
</dbReference>
<dbReference type="InterPro" id="IPR014222">
    <property type="entry name" value="Cyt_c_oxidase_su2"/>
</dbReference>
<dbReference type="InterPro" id="IPR011759">
    <property type="entry name" value="Cyt_c_oxidase_su2_TM_dom"/>
</dbReference>
<dbReference type="InterPro" id="IPR036257">
    <property type="entry name" value="Cyt_c_oxidase_su2_TM_sf"/>
</dbReference>
<dbReference type="NCBIfam" id="TIGR02866">
    <property type="entry name" value="CoxB"/>
    <property type="match status" value="1"/>
</dbReference>
<dbReference type="PANTHER" id="PTHR22888:SF9">
    <property type="entry name" value="CYTOCHROME C OXIDASE SUBUNIT 2"/>
    <property type="match status" value="1"/>
</dbReference>
<dbReference type="PANTHER" id="PTHR22888">
    <property type="entry name" value="CYTOCHROME C OXIDASE, SUBUNIT II"/>
    <property type="match status" value="1"/>
</dbReference>
<dbReference type="Pfam" id="PF00116">
    <property type="entry name" value="COX2"/>
    <property type="match status" value="1"/>
</dbReference>
<dbReference type="Pfam" id="PF02790">
    <property type="entry name" value="COX2_TM"/>
    <property type="match status" value="1"/>
</dbReference>
<dbReference type="PRINTS" id="PR01166">
    <property type="entry name" value="CYCOXIDASEII"/>
</dbReference>
<dbReference type="SUPFAM" id="SSF49503">
    <property type="entry name" value="Cupredoxins"/>
    <property type="match status" value="1"/>
</dbReference>
<dbReference type="SUPFAM" id="SSF81464">
    <property type="entry name" value="Cytochrome c oxidase subunit II-like, transmembrane region"/>
    <property type="match status" value="1"/>
</dbReference>
<dbReference type="PROSITE" id="PS00078">
    <property type="entry name" value="COX2"/>
    <property type="match status" value="1"/>
</dbReference>
<dbReference type="PROSITE" id="PS50857">
    <property type="entry name" value="COX2_CUA"/>
    <property type="match status" value="1"/>
</dbReference>
<dbReference type="PROSITE" id="PS50999">
    <property type="entry name" value="COX2_TM"/>
    <property type="match status" value="1"/>
</dbReference>
<sequence length="248" mass="28554">MMKELLMNNMLNDVPTPWAMYFQDSATPNMEGIMELHNNVVFYLIIMLCFVTYMLYNISTVYNKSAVAYKYMNHGQFIEMVWTTFPAVMLLIMAFPSFMLLYICDEVMAPAMTIKAMGLQWYWKYEYSDFMDEKGETIEFESYIIPEDLLEDGQLRMLDVDASVVCPVDTHIRFIVTSADVIHDFCMPSLGIKIDAAPGRLNQTSALIQREGVYYGQCSELCGVMHSAMPIKIEVVPTADFLTWIDEQ</sequence>
<organism>
    <name type="scientific">Brettanomyces naardenensis</name>
    <name type="common">Yeast</name>
    <dbReference type="NCBI Taxonomy" id="13370"/>
    <lineage>
        <taxon>Eukaryota</taxon>
        <taxon>Fungi</taxon>
        <taxon>Dikarya</taxon>
        <taxon>Ascomycota</taxon>
        <taxon>Saccharomycotina</taxon>
        <taxon>Pichiomycetes</taxon>
        <taxon>Pichiales</taxon>
        <taxon>Pichiaceae</taxon>
        <taxon>Brettanomyces</taxon>
    </lineage>
</organism>
<accession>P43372</accession>
<keyword id="KW-0186">Copper</keyword>
<keyword id="KW-0249">Electron transport</keyword>
<keyword id="KW-0460">Magnesium</keyword>
<keyword id="KW-0472">Membrane</keyword>
<keyword id="KW-0479">Metal-binding</keyword>
<keyword id="KW-0496">Mitochondrion</keyword>
<keyword id="KW-0999">Mitochondrion inner membrane</keyword>
<keyword id="KW-0679">Respiratory chain</keyword>
<keyword id="KW-1278">Translocase</keyword>
<keyword id="KW-0812">Transmembrane</keyword>
<keyword id="KW-1133">Transmembrane helix</keyword>
<keyword id="KW-0813">Transport</keyword>
<comment type="function">
    <text evidence="1">Component of the cytochrome c oxidase, the last enzyme in the mitochondrial electron transport chain which drives oxidative phosphorylation. The respiratory chain contains 3 multisubunit complexes succinate dehydrogenase (complex II, CII), ubiquinol-cytochrome c oxidoreductase (cytochrome b-c1 complex, complex III, CIII) and cytochrome c oxidase (complex IV, CIV), that cooperate to transfer electrons derived from NADH and succinate to molecular oxygen, creating an electrochemical gradient over the inner membrane that drives transmembrane transport and the ATP synthase. Cytochrome c oxidase is the component of the respiratory chain that catalyzes the reduction of oxygen to water. Electrons originating from reduced cytochrome c in the intermembrane space (IMS) are transferred via the dinuclear copper A center (CU(A)) of subunit 2 and heme A of subunit 1 to the active site in subunit 1, a binuclear center (BNC) formed by heme A3 and copper B (CU(B)). The BNC reduces molecular oxygen to 2 water molecules using 4 electrons from cytochrome c in the IMS and 4 protons from the mitochondrial matrix.</text>
</comment>
<comment type="catalytic activity">
    <reaction evidence="1">
        <text>4 Fe(II)-[cytochrome c] + O2 + 8 H(+)(in) = 4 Fe(III)-[cytochrome c] + 2 H2O + 4 H(+)(out)</text>
        <dbReference type="Rhea" id="RHEA:11436"/>
        <dbReference type="Rhea" id="RHEA-COMP:10350"/>
        <dbReference type="Rhea" id="RHEA-COMP:14399"/>
        <dbReference type="ChEBI" id="CHEBI:15377"/>
        <dbReference type="ChEBI" id="CHEBI:15378"/>
        <dbReference type="ChEBI" id="CHEBI:15379"/>
        <dbReference type="ChEBI" id="CHEBI:29033"/>
        <dbReference type="ChEBI" id="CHEBI:29034"/>
        <dbReference type="EC" id="7.1.1.9"/>
    </reaction>
    <physiologicalReaction direction="left-to-right" evidence="1">
        <dbReference type="Rhea" id="RHEA:11437"/>
    </physiologicalReaction>
</comment>
<comment type="cofactor">
    <cofactor evidence="1">
        <name>Cu cation</name>
        <dbReference type="ChEBI" id="CHEBI:23378"/>
    </cofactor>
    <text evidence="1">Binds a dinuclear copper A center per subunit.</text>
</comment>
<comment type="subunit">
    <text evidence="1">Component of the cytochrome c oxidase (complex IV, CIV), a multisubunit enzyme composed of a catalytic core of 3 subunits and several supernumerary subunits. The complex exists as a monomer or a dimer and forms supercomplexes (SCs) in the inner mitochondrial membrane with ubiquinol-cytochrome c oxidoreductase (cytochrome b-c1 complex, complex III, CIII).</text>
</comment>
<comment type="subcellular location">
    <subcellularLocation>
        <location evidence="1">Mitochondrion inner membrane</location>
        <topology evidence="1">Multi-pass membrane protein</topology>
    </subcellularLocation>
</comment>
<comment type="similarity">
    <text evidence="3">Belongs to the cytochrome c oxidase subunit 2 family.</text>
</comment>
<reference key="1">
    <citation type="journal article" date="1993" name="J. Mol. Evol.">
        <title>Larger rearranged mitochondrial genomes in Dekkera/Brettanomyces yeasts are more closely related than smaller genomes with a conserved gene order.</title>
        <authorList>
            <person name="Hoeben P."/>
            <person name="Weiller G."/>
            <person name="Clark-Walker G.D."/>
        </authorList>
    </citation>
    <scope>NUCLEOTIDE SEQUENCE [GENOMIC DNA]</scope>
    <source>
        <strain>CBS 6042</strain>
    </source>
</reference>
<protein>
    <recommendedName>
        <fullName>Cytochrome c oxidase subunit 2</fullName>
        <ecNumber>7.1.1.9</ecNumber>
    </recommendedName>
    <alternativeName>
        <fullName>Cytochrome c oxidase polypeptide II</fullName>
    </alternativeName>
</protein>